<protein>
    <recommendedName>
        <fullName evidence="5">Vitelline membrane protein Vm32E</fullName>
    </recommendedName>
</protein>
<proteinExistence type="inferred from homology"/>
<evidence type="ECO:0000250" key="1">
    <source>
        <dbReference type="UniProtKB" id="Q9VKI3"/>
    </source>
</evidence>
<evidence type="ECO:0000255" key="2"/>
<evidence type="ECO:0000255" key="3">
    <source>
        <dbReference type="PROSITE-ProRule" id="PRU00483"/>
    </source>
</evidence>
<evidence type="ECO:0000305" key="4"/>
<evidence type="ECO:0000312" key="5">
    <source>
        <dbReference type="EMBL" id="ABO71728.1"/>
    </source>
</evidence>
<organism>
    <name type="scientific">Drosophila teissieri</name>
    <name type="common">Fruit fly</name>
    <dbReference type="NCBI Taxonomy" id="7243"/>
    <lineage>
        <taxon>Eukaryota</taxon>
        <taxon>Metazoa</taxon>
        <taxon>Ecdysozoa</taxon>
        <taxon>Arthropoda</taxon>
        <taxon>Hexapoda</taxon>
        <taxon>Insecta</taxon>
        <taxon>Pterygota</taxon>
        <taxon>Neoptera</taxon>
        <taxon>Endopterygota</taxon>
        <taxon>Diptera</taxon>
        <taxon>Brachycera</taxon>
        <taxon>Muscomorpha</taxon>
        <taxon>Ephydroidea</taxon>
        <taxon>Drosophilidae</taxon>
        <taxon>Drosophila</taxon>
        <taxon>Sophophora</taxon>
    </lineage>
</organism>
<accession>A4UM19</accession>
<feature type="signal peptide" evidence="2">
    <location>
        <begin position="1"/>
        <end position="17"/>
    </location>
</feature>
<feature type="chain" id="PRO_0000398802" description="Vitelline membrane protein Vm32E" evidence="2">
    <location>
        <begin position="18"/>
        <end position="116"/>
    </location>
</feature>
<feature type="domain" description="VM" evidence="3">
    <location>
        <begin position="36"/>
        <end position="73"/>
    </location>
</feature>
<reference evidence="5" key="1">
    <citation type="journal article" date="2007" name="Mol. Biol. Evol.">
        <title>Rapid evolution of outer egg membrane proteins in the Drosophila melanogaster subgroup: a case of ecologically driven evolution of female reproductive traits.</title>
        <authorList>
            <person name="Jagadeeshan S."/>
            <person name="Singh R.S."/>
        </authorList>
    </citation>
    <scope>NUCLEOTIDE SEQUENCE [GENOMIC DNA]</scope>
</reference>
<dbReference type="EMBL" id="EF441687">
    <property type="protein sequence ID" value="ABO71728.1"/>
    <property type="molecule type" value="Genomic_DNA"/>
</dbReference>
<dbReference type="GO" id="GO:0005615">
    <property type="term" value="C:extracellular space"/>
    <property type="evidence" value="ECO:0000250"/>
    <property type="project" value="UniProtKB"/>
</dbReference>
<dbReference type="GO" id="GO:0008316">
    <property type="term" value="F:structural constituent of vitelline membrane"/>
    <property type="evidence" value="ECO:0000250"/>
    <property type="project" value="UniProtKB"/>
</dbReference>
<dbReference type="GO" id="GO:0007305">
    <property type="term" value="P:vitelline membrane formation involved in chorion-containing eggshell formation"/>
    <property type="evidence" value="ECO:0000250"/>
    <property type="project" value="UniProtKB"/>
</dbReference>
<dbReference type="InterPro" id="IPR013135">
    <property type="entry name" value="Vitelline_membr_Cys-rich-dom"/>
</dbReference>
<dbReference type="Pfam" id="PF10542">
    <property type="entry name" value="Vitelline_membr"/>
    <property type="match status" value="1"/>
</dbReference>
<dbReference type="PROSITE" id="PS51137">
    <property type="entry name" value="VM"/>
    <property type="match status" value="1"/>
</dbReference>
<comment type="function">
    <text evidence="1">Major early eggshell protein.</text>
</comment>
<comment type="subcellular location">
    <subcellularLocation>
        <location evidence="1">Secreted</location>
    </subcellularLocation>
</comment>
<comment type="similarity">
    <text evidence="4">Belongs to the vitelline membrane family.</text>
</comment>
<gene>
    <name evidence="5" type="primary">Vm32E</name>
</gene>
<sequence>MKIVAFTLVAFVALAGASCPYAAPAAAYPAPVAPSGYPAPPCPTNYLFSCQPNLAPAPCAQEAPAYGSAGAYTEQVPHYVGNPSREQVQQFHQRIGMAALMEELRGLGQGIQGQQY</sequence>
<name>VTU4_DROTE</name>
<keyword id="KW-0964">Secreted</keyword>
<keyword id="KW-0732">Signal</keyword>